<comment type="function">
    <text evidence="1">Catalyzes the methylthiolation of N6-(dimethylallyl)adenosine (i(6)A), leading to the formation of 2-methylthio-N6-(dimethylallyl)adenosine (ms(2)i(6)A) at position 37 in tRNAs that read codons beginning with uridine.</text>
</comment>
<comment type="catalytic activity">
    <reaction evidence="1">
        <text>N(6)-dimethylallyladenosine(37) in tRNA + (sulfur carrier)-SH + AH2 + 2 S-adenosyl-L-methionine = 2-methylsulfanyl-N(6)-dimethylallyladenosine(37) in tRNA + (sulfur carrier)-H + 5'-deoxyadenosine + L-methionine + A + S-adenosyl-L-homocysteine + 2 H(+)</text>
        <dbReference type="Rhea" id="RHEA:37067"/>
        <dbReference type="Rhea" id="RHEA-COMP:10375"/>
        <dbReference type="Rhea" id="RHEA-COMP:10376"/>
        <dbReference type="Rhea" id="RHEA-COMP:14737"/>
        <dbReference type="Rhea" id="RHEA-COMP:14739"/>
        <dbReference type="ChEBI" id="CHEBI:13193"/>
        <dbReference type="ChEBI" id="CHEBI:15378"/>
        <dbReference type="ChEBI" id="CHEBI:17319"/>
        <dbReference type="ChEBI" id="CHEBI:17499"/>
        <dbReference type="ChEBI" id="CHEBI:29917"/>
        <dbReference type="ChEBI" id="CHEBI:57844"/>
        <dbReference type="ChEBI" id="CHEBI:57856"/>
        <dbReference type="ChEBI" id="CHEBI:59789"/>
        <dbReference type="ChEBI" id="CHEBI:64428"/>
        <dbReference type="ChEBI" id="CHEBI:74415"/>
        <dbReference type="ChEBI" id="CHEBI:74417"/>
        <dbReference type="EC" id="2.8.4.3"/>
    </reaction>
</comment>
<comment type="cofactor">
    <cofactor evidence="1">
        <name>[4Fe-4S] cluster</name>
        <dbReference type="ChEBI" id="CHEBI:49883"/>
    </cofactor>
    <text evidence="1">Binds 2 [4Fe-4S] clusters. One cluster is coordinated with 3 cysteines and an exchangeable S-adenosyl-L-methionine.</text>
</comment>
<comment type="subunit">
    <text evidence="1">Monomer.</text>
</comment>
<comment type="subcellular location">
    <subcellularLocation>
        <location evidence="1">Cytoplasm</location>
    </subcellularLocation>
</comment>
<comment type="similarity">
    <text evidence="1">Belongs to the methylthiotransferase family. MiaB subfamily.</text>
</comment>
<keyword id="KW-0004">4Fe-4S</keyword>
<keyword id="KW-0963">Cytoplasm</keyword>
<keyword id="KW-0408">Iron</keyword>
<keyword id="KW-0411">Iron-sulfur</keyword>
<keyword id="KW-0479">Metal-binding</keyword>
<keyword id="KW-1185">Reference proteome</keyword>
<keyword id="KW-0949">S-adenosyl-L-methionine</keyword>
<keyword id="KW-0808">Transferase</keyword>
<keyword id="KW-0819">tRNA processing</keyword>
<accession>Q8DJB2</accession>
<organism>
    <name type="scientific">Thermosynechococcus vestitus (strain NIES-2133 / IAM M-273 / BP-1)</name>
    <dbReference type="NCBI Taxonomy" id="197221"/>
    <lineage>
        <taxon>Bacteria</taxon>
        <taxon>Bacillati</taxon>
        <taxon>Cyanobacteriota</taxon>
        <taxon>Cyanophyceae</taxon>
        <taxon>Acaryochloridales</taxon>
        <taxon>Thermosynechococcaceae</taxon>
        <taxon>Thermosynechococcus</taxon>
    </lineage>
</organism>
<reference key="1">
    <citation type="journal article" date="2002" name="DNA Res.">
        <title>Complete genome structure of the thermophilic cyanobacterium Thermosynechococcus elongatus BP-1.</title>
        <authorList>
            <person name="Nakamura Y."/>
            <person name="Kaneko T."/>
            <person name="Sato S."/>
            <person name="Ikeuchi M."/>
            <person name="Katoh H."/>
            <person name="Sasamoto S."/>
            <person name="Watanabe A."/>
            <person name="Iriguchi M."/>
            <person name="Kawashima K."/>
            <person name="Kimura T."/>
            <person name="Kishida Y."/>
            <person name="Kiyokawa C."/>
            <person name="Kohara M."/>
            <person name="Matsumoto M."/>
            <person name="Matsuno A."/>
            <person name="Nakazaki N."/>
            <person name="Shimpo S."/>
            <person name="Sugimoto M."/>
            <person name="Takeuchi C."/>
            <person name="Yamada M."/>
            <person name="Tabata S."/>
        </authorList>
    </citation>
    <scope>NUCLEOTIDE SEQUENCE [LARGE SCALE GENOMIC DNA]</scope>
    <source>
        <strain>NIES-2133 / IAM M-273 / BP-1</strain>
    </source>
</reference>
<proteinExistence type="inferred from homology"/>
<gene>
    <name evidence="1" type="primary">miaB</name>
    <name type="ordered locus">tlr1315</name>
</gene>
<evidence type="ECO:0000255" key="1">
    <source>
        <dbReference type="HAMAP-Rule" id="MF_01864"/>
    </source>
</evidence>
<evidence type="ECO:0000255" key="2">
    <source>
        <dbReference type="PROSITE-ProRule" id="PRU01266"/>
    </source>
</evidence>
<dbReference type="EC" id="2.8.4.3" evidence="1"/>
<dbReference type="EMBL" id="BA000039">
    <property type="protein sequence ID" value="BAC08867.1"/>
    <property type="molecule type" value="Genomic_DNA"/>
</dbReference>
<dbReference type="RefSeq" id="NP_682105.1">
    <property type="nucleotide sequence ID" value="NC_004113.1"/>
</dbReference>
<dbReference type="RefSeq" id="WP_011057155.1">
    <property type="nucleotide sequence ID" value="NC_004113.1"/>
</dbReference>
<dbReference type="SMR" id="Q8DJB2"/>
<dbReference type="STRING" id="197221.gene:10747913"/>
<dbReference type="EnsemblBacteria" id="BAC08867">
    <property type="protein sequence ID" value="BAC08867"/>
    <property type="gene ID" value="BAC08867"/>
</dbReference>
<dbReference type="KEGG" id="tel:tlr1315"/>
<dbReference type="PATRIC" id="fig|197221.4.peg.1383"/>
<dbReference type="eggNOG" id="COG0621">
    <property type="taxonomic scope" value="Bacteria"/>
</dbReference>
<dbReference type="Proteomes" id="UP000000440">
    <property type="component" value="Chromosome"/>
</dbReference>
<dbReference type="GO" id="GO:0005737">
    <property type="term" value="C:cytoplasm"/>
    <property type="evidence" value="ECO:0007669"/>
    <property type="project" value="UniProtKB-SubCell"/>
</dbReference>
<dbReference type="GO" id="GO:0051539">
    <property type="term" value="F:4 iron, 4 sulfur cluster binding"/>
    <property type="evidence" value="ECO:0007669"/>
    <property type="project" value="UniProtKB-UniRule"/>
</dbReference>
<dbReference type="GO" id="GO:0046872">
    <property type="term" value="F:metal ion binding"/>
    <property type="evidence" value="ECO:0007669"/>
    <property type="project" value="UniProtKB-KW"/>
</dbReference>
<dbReference type="GO" id="GO:0035596">
    <property type="term" value="F:methylthiotransferase activity"/>
    <property type="evidence" value="ECO:0007669"/>
    <property type="project" value="InterPro"/>
</dbReference>
<dbReference type="GO" id="GO:0035600">
    <property type="term" value="P:tRNA methylthiolation"/>
    <property type="evidence" value="ECO:0007669"/>
    <property type="project" value="TreeGrafter"/>
</dbReference>
<dbReference type="CDD" id="cd01335">
    <property type="entry name" value="Radical_SAM"/>
    <property type="match status" value="1"/>
</dbReference>
<dbReference type="FunFam" id="3.40.50.12160:FF:000006">
    <property type="entry name" value="tRNA-2-methylthio-N(6)-dimethylallyladenosine synthase"/>
    <property type="match status" value="1"/>
</dbReference>
<dbReference type="FunFam" id="3.80.30.20:FF:000001">
    <property type="entry name" value="tRNA-2-methylthio-N(6)-dimethylallyladenosine synthase 2"/>
    <property type="match status" value="1"/>
</dbReference>
<dbReference type="Gene3D" id="3.40.50.12160">
    <property type="entry name" value="Methylthiotransferase, N-terminal domain"/>
    <property type="match status" value="1"/>
</dbReference>
<dbReference type="Gene3D" id="3.80.30.20">
    <property type="entry name" value="tm_1862 like domain"/>
    <property type="match status" value="1"/>
</dbReference>
<dbReference type="HAMAP" id="MF_01864">
    <property type="entry name" value="tRNA_metthiotr_MiaB"/>
    <property type="match status" value="1"/>
</dbReference>
<dbReference type="InterPro" id="IPR006638">
    <property type="entry name" value="Elp3/MiaA/NifB-like_rSAM"/>
</dbReference>
<dbReference type="InterPro" id="IPR005839">
    <property type="entry name" value="Methylthiotransferase"/>
</dbReference>
<dbReference type="InterPro" id="IPR020612">
    <property type="entry name" value="Methylthiotransferase_CS"/>
</dbReference>
<dbReference type="InterPro" id="IPR013848">
    <property type="entry name" value="Methylthiotransferase_N"/>
</dbReference>
<dbReference type="InterPro" id="IPR038135">
    <property type="entry name" value="Methylthiotransferase_N_sf"/>
</dbReference>
<dbReference type="InterPro" id="IPR006463">
    <property type="entry name" value="MiaB_methiolase"/>
</dbReference>
<dbReference type="InterPro" id="IPR007197">
    <property type="entry name" value="rSAM"/>
</dbReference>
<dbReference type="InterPro" id="IPR023404">
    <property type="entry name" value="rSAM_horseshoe"/>
</dbReference>
<dbReference type="InterPro" id="IPR002792">
    <property type="entry name" value="TRAM_dom"/>
</dbReference>
<dbReference type="NCBIfam" id="TIGR01574">
    <property type="entry name" value="miaB-methiolase"/>
    <property type="match status" value="1"/>
</dbReference>
<dbReference type="NCBIfam" id="TIGR00089">
    <property type="entry name" value="MiaB/RimO family radical SAM methylthiotransferase"/>
    <property type="match status" value="1"/>
</dbReference>
<dbReference type="PANTHER" id="PTHR43020">
    <property type="entry name" value="CDK5 REGULATORY SUBUNIT-ASSOCIATED PROTEIN 1"/>
    <property type="match status" value="1"/>
</dbReference>
<dbReference type="PANTHER" id="PTHR43020:SF2">
    <property type="entry name" value="MITOCHONDRIAL TRNA METHYLTHIOTRANSFERASE CDK5RAP1"/>
    <property type="match status" value="1"/>
</dbReference>
<dbReference type="Pfam" id="PF04055">
    <property type="entry name" value="Radical_SAM"/>
    <property type="match status" value="1"/>
</dbReference>
<dbReference type="Pfam" id="PF01938">
    <property type="entry name" value="TRAM"/>
    <property type="match status" value="1"/>
</dbReference>
<dbReference type="Pfam" id="PF00919">
    <property type="entry name" value="UPF0004"/>
    <property type="match status" value="1"/>
</dbReference>
<dbReference type="SFLD" id="SFLDF00273">
    <property type="entry name" value="(dimethylallyl)adenosine_tRNA"/>
    <property type="match status" value="1"/>
</dbReference>
<dbReference type="SFLD" id="SFLDG01082">
    <property type="entry name" value="B12-binding_domain_containing"/>
    <property type="match status" value="1"/>
</dbReference>
<dbReference type="SFLD" id="SFLDG01061">
    <property type="entry name" value="methylthiotransferase"/>
    <property type="match status" value="1"/>
</dbReference>
<dbReference type="SMART" id="SM00729">
    <property type="entry name" value="Elp3"/>
    <property type="match status" value="1"/>
</dbReference>
<dbReference type="SUPFAM" id="SSF102114">
    <property type="entry name" value="Radical SAM enzymes"/>
    <property type="match status" value="1"/>
</dbReference>
<dbReference type="PROSITE" id="PS51449">
    <property type="entry name" value="MTTASE_N"/>
    <property type="match status" value="1"/>
</dbReference>
<dbReference type="PROSITE" id="PS01278">
    <property type="entry name" value="MTTASE_RADICAL"/>
    <property type="match status" value="1"/>
</dbReference>
<dbReference type="PROSITE" id="PS51918">
    <property type="entry name" value="RADICAL_SAM"/>
    <property type="match status" value="1"/>
</dbReference>
<dbReference type="PROSITE" id="PS50926">
    <property type="entry name" value="TRAM"/>
    <property type="match status" value="1"/>
</dbReference>
<protein>
    <recommendedName>
        <fullName evidence="1">tRNA-2-methylthio-N(6)-dimethylallyladenosine synthase</fullName>
        <ecNumber evidence="1">2.8.4.3</ecNumber>
    </recommendedName>
    <alternativeName>
        <fullName evidence="1">(Dimethylallyl)adenosine tRNA methylthiotransferase MiaB</fullName>
    </alternativeName>
    <alternativeName>
        <fullName evidence="1">tRNA-i(6)A37 methylthiotransferase</fullName>
    </alternativeName>
</protein>
<sequence length="450" mass="50739">MPRRYYITTFGCQMNKADSERMAGILEAMGLELAAEPDEADVLLYNTCTIRDNAEQKLYSYLGRQAKRKHQDPNLTLIVAGCVAQQEGEQLLRRVPEVDLVMGPQYANRLGELLEQVWNGSQVVATEPLQIVEDITKPRRDSTVTAWVNVIYGCNERCTYCVVPGVRGQEQSRRPEAIRAEIEELAAQGYKEVTLLGQNIDAYGRDLPGITPEGRRQHTFTDLLYYIHDVAGIERIRFATSHPRYFTERLIRACAELPKVCKHFHIPFQSGDNEILKAMARGYTRERYLHIIETIRRYMPDAAISADAIVGFPGETEEQFQRTLDLVAAVGFDQLNTAAYSPRPNTPAATWENQVPEAIKEDRLQRLNHLVAKIAGDRSQRYLGREEVVLVEGVNPKDAQQVYGRTDGNRLTYLPGDIETLRGQLVRVRITEARAFSLSGVPLAASSLVC</sequence>
<name>MIAB_THEVB</name>
<feature type="chain" id="PRO_0000374613" description="tRNA-2-methylthio-N(6)-dimethylallyladenosine synthase">
    <location>
        <begin position="1"/>
        <end position="450"/>
    </location>
</feature>
<feature type="domain" description="MTTase N-terminal" evidence="1">
    <location>
        <begin position="3"/>
        <end position="119"/>
    </location>
</feature>
<feature type="domain" description="Radical SAM core" evidence="2">
    <location>
        <begin position="140"/>
        <end position="377"/>
    </location>
</feature>
<feature type="domain" description="TRAM" evidence="1">
    <location>
        <begin position="380"/>
        <end position="444"/>
    </location>
</feature>
<feature type="binding site" evidence="1">
    <location>
        <position position="12"/>
    </location>
    <ligand>
        <name>[4Fe-4S] cluster</name>
        <dbReference type="ChEBI" id="CHEBI:49883"/>
        <label>1</label>
    </ligand>
</feature>
<feature type="binding site" evidence="1">
    <location>
        <position position="48"/>
    </location>
    <ligand>
        <name>[4Fe-4S] cluster</name>
        <dbReference type="ChEBI" id="CHEBI:49883"/>
        <label>1</label>
    </ligand>
</feature>
<feature type="binding site" evidence="1">
    <location>
        <position position="82"/>
    </location>
    <ligand>
        <name>[4Fe-4S] cluster</name>
        <dbReference type="ChEBI" id="CHEBI:49883"/>
        <label>1</label>
    </ligand>
</feature>
<feature type="binding site" evidence="1">
    <location>
        <position position="154"/>
    </location>
    <ligand>
        <name>[4Fe-4S] cluster</name>
        <dbReference type="ChEBI" id="CHEBI:49883"/>
        <label>2</label>
        <note>4Fe-4S-S-AdoMet</note>
    </ligand>
</feature>
<feature type="binding site" evidence="1">
    <location>
        <position position="158"/>
    </location>
    <ligand>
        <name>[4Fe-4S] cluster</name>
        <dbReference type="ChEBI" id="CHEBI:49883"/>
        <label>2</label>
        <note>4Fe-4S-S-AdoMet</note>
    </ligand>
</feature>
<feature type="binding site" evidence="1">
    <location>
        <position position="161"/>
    </location>
    <ligand>
        <name>[4Fe-4S] cluster</name>
        <dbReference type="ChEBI" id="CHEBI:49883"/>
        <label>2</label>
        <note>4Fe-4S-S-AdoMet</note>
    </ligand>
</feature>